<dbReference type="EC" id="3.1.21.10" evidence="1"/>
<dbReference type="EMBL" id="CP000029">
    <property type="protein sequence ID" value="AAW54395.1"/>
    <property type="status" value="ALT_INIT"/>
    <property type="molecule type" value="Genomic_DNA"/>
</dbReference>
<dbReference type="RefSeq" id="WP_002476769.1">
    <property type="nucleotide sequence ID" value="NC_002976.3"/>
</dbReference>
<dbReference type="SMR" id="Q5HP94"/>
<dbReference type="STRING" id="176279.SERP1019"/>
<dbReference type="GeneID" id="50018740"/>
<dbReference type="KEGG" id="ser:SERP1019"/>
<dbReference type="eggNOG" id="COG3331">
    <property type="taxonomic scope" value="Bacteria"/>
</dbReference>
<dbReference type="HOGENOM" id="CLU_096340_0_0_9"/>
<dbReference type="Proteomes" id="UP000000531">
    <property type="component" value="Chromosome"/>
</dbReference>
<dbReference type="GO" id="GO:0005737">
    <property type="term" value="C:cytoplasm"/>
    <property type="evidence" value="ECO:0007669"/>
    <property type="project" value="UniProtKB-SubCell"/>
</dbReference>
<dbReference type="GO" id="GO:0004519">
    <property type="term" value="F:endonuclease activity"/>
    <property type="evidence" value="ECO:0007669"/>
    <property type="project" value="UniProtKB-UniRule"/>
</dbReference>
<dbReference type="GO" id="GO:0000287">
    <property type="term" value="F:magnesium ion binding"/>
    <property type="evidence" value="ECO:0007669"/>
    <property type="project" value="UniProtKB-UniRule"/>
</dbReference>
<dbReference type="GO" id="GO:0003676">
    <property type="term" value="F:nucleic acid binding"/>
    <property type="evidence" value="ECO:0007669"/>
    <property type="project" value="InterPro"/>
</dbReference>
<dbReference type="GO" id="GO:0007059">
    <property type="term" value="P:chromosome segregation"/>
    <property type="evidence" value="ECO:0007669"/>
    <property type="project" value="UniProtKB-UniRule"/>
</dbReference>
<dbReference type="GO" id="GO:0006310">
    <property type="term" value="P:DNA recombination"/>
    <property type="evidence" value="ECO:0007669"/>
    <property type="project" value="UniProtKB-UniRule"/>
</dbReference>
<dbReference type="GO" id="GO:0006281">
    <property type="term" value="P:DNA repair"/>
    <property type="evidence" value="ECO:0007669"/>
    <property type="project" value="UniProtKB-UniRule"/>
</dbReference>
<dbReference type="CDD" id="cd22354">
    <property type="entry name" value="RecU-like"/>
    <property type="match status" value="1"/>
</dbReference>
<dbReference type="Gene3D" id="3.40.1350.10">
    <property type="match status" value="1"/>
</dbReference>
<dbReference type="HAMAP" id="MF_00130">
    <property type="entry name" value="RecU"/>
    <property type="match status" value="1"/>
</dbReference>
<dbReference type="InterPro" id="IPR004612">
    <property type="entry name" value="Resolv_RecU"/>
</dbReference>
<dbReference type="InterPro" id="IPR011335">
    <property type="entry name" value="Restrct_endonuc-II-like"/>
</dbReference>
<dbReference type="InterPro" id="IPR011856">
    <property type="entry name" value="tRNA_endonuc-like_dom_sf"/>
</dbReference>
<dbReference type="NCBIfam" id="NF002581">
    <property type="entry name" value="PRK02234.1-2"/>
    <property type="match status" value="1"/>
</dbReference>
<dbReference type="NCBIfam" id="NF002583">
    <property type="entry name" value="PRK02234.1-4"/>
    <property type="match status" value="1"/>
</dbReference>
<dbReference type="NCBIfam" id="NF002584">
    <property type="entry name" value="PRK02234.1-5"/>
    <property type="match status" value="1"/>
</dbReference>
<dbReference type="NCBIfam" id="TIGR00648">
    <property type="entry name" value="recU"/>
    <property type="match status" value="1"/>
</dbReference>
<dbReference type="Pfam" id="PF03838">
    <property type="entry name" value="RecU"/>
    <property type="match status" value="1"/>
</dbReference>
<dbReference type="PIRSF" id="PIRSF037785">
    <property type="entry name" value="RecU"/>
    <property type="match status" value="1"/>
</dbReference>
<dbReference type="SUPFAM" id="SSF52980">
    <property type="entry name" value="Restriction endonuclease-like"/>
    <property type="match status" value="1"/>
</dbReference>
<gene>
    <name evidence="1" type="primary">recU</name>
    <name type="ordered locus">SERP1019</name>
</gene>
<name>RECU_STAEQ</name>
<comment type="function">
    <text evidence="1">Endonuclease that resolves Holliday junction intermediates in genetic recombination. Cleaves mobile four-strand junctions by introducing symmetrical nicks in paired strands. Promotes annealing of linear ssDNA with homologous dsDNA. Required for DNA repair, homologous recombination and chromosome segregation.</text>
</comment>
<comment type="catalytic activity">
    <reaction evidence="1">
        <text>Endonucleolytic cleavage at a junction such as a reciprocal single-stranded crossover between two homologous DNA duplexes (Holliday junction).</text>
        <dbReference type="EC" id="3.1.21.10"/>
    </reaction>
</comment>
<comment type="cofactor">
    <cofactor evidence="1">
        <name>Mg(2+)</name>
        <dbReference type="ChEBI" id="CHEBI:18420"/>
    </cofactor>
    <text evidence="1">Binds 1 Mg(2+) ion per subunit.</text>
</comment>
<comment type="subcellular location">
    <subcellularLocation>
        <location evidence="1">Cytoplasm</location>
    </subcellularLocation>
</comment>
<comment type="similarity">
    <text evidence="1">Belongs to the RecU family.</text>
</comment>
<comment type="sequence caution" evidence="3">
    <conflict type="erroneous initiation">
        <sequence resource="EMBL-CDS" id="AAW54395"/>
    </conflict>
</comment>
<evidence type="ECO:0000255" key="1">
    <source>
        <dbReference type="HAMAP-Rule" id="MF_00130"/>
    </source>
</evidence>
<evidence type="ECO:0000256" key="2">
    <source>
        <dbReference type="SAM" id="MobiDB-lite"/>
    </source>
</evidence>
<evidence type="ECO:0000305" key="3"/>
<protein>
    <recommendedName>
        <fullName evidence="1">Holliday junction resolvase RecU</fullName>
        <ecNumber evidence="1">3.1.21.10</ecNumber>
    </recommendedName>
    <alternativeName>
        <fullName evidence="1">Recombination protein U homolog</fullName>
    </alternativeName>
</protein>
<organism>
    <name type="scientific">Staphylococcus epidermidis (strain ATCC 35984 / DSM 28319 / BCRC 17069 / CCUG 31568 / BM 3577 / RP62A)</name>
    <dbReference type="NCBI Taxonomy" id="176279"/>
    <lineage>
        <taxon>Bacteria</taxon>
        <taxon>Bacillati</taxon>
        <taxon>Bacillota</taxon>
        <taxon>Bacilli</taxon>
        <taxon>Bacillales</taxon>
        <taxon>Staphylococcaceae</taxon>
        <taxon>Staphylococcus</taxon>
    </lineage>
</organism>
<proteinExistence type="inferred from homology"/>
<feature type="chain" id="PRO_0000212310" description="Holliday junction resolvase RecU">
    <location>
        <begin position="1"/>
        <end position="208"/>
    </location>
</feature>
<feature type="region of interest" description="Disordered" evidence="2">
    <location>
        <begin position="1"/>
        <end position="28"/>
    </location>
</feature>
<feature type="binding site" evidence="1">
    <location>
        <position position="87"/>
    </location>
    <ligand>
        <name>Mg(2+)</name>
        <dbReference type="ChEBI" id="CHEBI:18420"/>
    </ligand>
</feature>
<feature type="binding site" evidence="1">
    <location>
        <position position="89"/>
    </location>
    <ligand>
        <name>Mg(2+)</name>
        <dbReference type="ChEBI" id="CHEBI:18420"/>
    </ligand>
</feature>
<feature type="binding site" evidence="1">
    <location>
        <position position="102"/>
    </location>
    <ligand>
        <name>Mg(2+)</name>
        <dbReference type="ChEBI" id="CHEBI:18420"/>
    </ligand>
</feature>
<feature type="binding site" evidence="1">
    <location>
        <position position="121"/>
    </location>
    <ligand>
        <name>Mg(2+)</name>
        <dbReference type="ChEBI" id="CHEBI:18420"/>
    </ligand>
</feature>
<feature type="site" description="Transition state stabilizer" evidence="1">
    <location>
        <position position="104"/>
    </location>
</feature>
<sequence>MNYPNGKPYSKNKPLDGRKSSPFSSNIEYGGRGMTLEKDIEQSNTFYLKSGIAVIHKKPTPVQIVNVHYPKRSKAVINEAYFRTPSTTDYNGVYNGYYIDFEAKETKNKTSFPLNNIHAHQVEHMKNTYHQKGIVFLMIRFKSLDEVYLLPYSKFEKYWQRYINNIKKSITVEEIRKNGYHIPYQYQPRLNYLKAVDKLILDESEDRV</sequence>
<reference key="1">
    <citation type="journal article" date="2005" name="J. Bacteriol.">
        <title>Insights on evolution of virulence and resistance from the complete genome analysis of an early methicillin-resistant Staphylococcus aureus strain and a biofilm-producing methicillin-resistant Staphylococcus epidermidis strain.</title>
        <authorList>
            <person name="Gill S.R."/>
            <person name="Fouts D.E."/>
            <person name="Archer G.L."/>
            <person name="Mongodin E.F."/>
            <person name="DeBoy R.T."/>
            <person name="Ravel J."/>
            <person name="Paulsen I.T."/>
            <person name="Kolonay J.F."/>
            <person name="Brinkac L.M."/>
            <person name="Beanan M.J."/>
            <person name="Dodson R.J."/>
            <person name="Daugherty S.C."/>
            <person name="Madupu R."/>
            <person name="Angiuoli S.V."/>
            <person name="Durkin A.S."/>
            <person name="Haft D.H."/>
            <person name="Vamathevan J.J."/>
            <person name="Khouri H."/>
            <person name="Utterback T.R."/>
            <person name="Lee C."/>
            <person name="Dimitrov G."/>
            <person name="Jiang L."/>
            <person name="Qin H."/>
            <person name="Weidman J."/>
            <person name="Tran K."/>
            <person name="Kang K.H."/>
            <person name="Hance I.R."/>
            <person name="Nelson K.E."/>
            <person name="Fraser C.M."/>
        </authorList>
    </citation>
    <scope>NUCLEOTIDE SEQUENCE [LARGE SCALE GENOMIC DNA]</scope>
    <source>
        <strain>ATCC 35984 / DSM 28319 / BCRC 17069 / CCUG 31568 / BM 3577 / RP62A</strain>
    </source>
</reference>
<accession>Q5HP94</accession>
<keyword id="KW-0963">Cytoplasm</keyword>
<keyword id="KW-0227">DNA damage</keyword>
<keyword id="KW-0233">DNA recombination</keyword>
<keyword id="KW-0234">DNA repair</keyword>
<keyword id="KW-0255">Endonuclease</keyword>
<keyword id="KW-0378">Hydrolase</keyword>
<keyword id="KW-0460">Magnesium</keyword>
<keyword id="KW-0479">Metal-binding</keyword>
<keyword id="KW-0540">Nuclease</keyword>
<keyword id="KW-1185">Reference proteome</keyword>